<comment type="subcellular location">
    <subcellularLocation>
        <location evidence="5">Secreted</location>
    </subcellularLocation>
</comment>
<comment type="tissue specificity">
    <text evidence="5">Expressed by the venom gland.</text>
</comment>
<comment type="domain">
    <text evidence="2">The presence of a 'disulfide through disulfide knot' structurally defines this protein as a knottin.</text>
</comment>
<comment type="similarity">
    <text evidence="4">Belongs to the neurotoxin 02 (plectoxin) family.</text>
</comment>
<evidence type="ECO:0000250" key="1"/>
<evidence type="ECO:0000250" key="2">
    <source>
        <dbReference type="UniProtKB" id="P30288"/>
    </source>
</evidence>
<evidence type="ECO:0000255" key="3"/>
<evidence type="ECO:0000305" key="4"/>
<evidence type="ECO:0000305" key="5">
    <source>
    </source>
</evidence>
<feature type="signal peptide" evidence="3">
    <location>
        <begin position="1"/>
        <end position="22"/>
    </location>
</feature>
<feature type="propeptide" id="PRO_0000401901" evidence="1">
    <location>
        <begin position="23"/>
        <end position="34"/>
    </location>
</feature>
<feature type="chain" id="PRO_0000401902" description="U18-lycotoxin-Ls1a">
    <location>
        <begin position="35"/>
        <end position="77"/>
    </location>
</feature>
<feature type="disulfide bond" evidence="2">
    <location>
        <begin position="36"/>
        <end position="51"/>
    </location>
</feature>
<feature type="disulfide bond" evidence="2">
    <location>
        <begin position="43"/>
        <end position="56"/>
    </location>
</feature>
<feature type="disulfide bond" evidence="2">
    <location>
        <begin position="50"/>
        <end position="67"/>
    </location>
</feature>
<feature type="disulfide bond" evidence="2">
    <location>
        <begin position="58"/>
        <end position="65"/>
    </location>
</feature>
<reference key="1">
    <citation type="journal article" date="2010" name="Zoology">
        <title>Transcriptome analysis of the venom glands of the Chinese wolf spider Lycosa singoriensis.</title>
        <authorList>
            <person name="Zhang Y."/>
            <person name="Chen J."/>
            <person name="Tang X."/>
            <person name="Wang F."/>
            <person name="Jiang L."/>
            <person name="Xiong X."/>
            <person name="Wang M."/>
            <person name="Rong M."/>
            <person name="Liu Z."/>
            <person name="Liang S."/>
        </authorList>
    </citation>
    <scope>NUCLEOTIDE SEQUENCE [LARGE SCALE MRNA]</scope>
    <source>
        <tissue>Venom gland</tissue>
    </source>
</reference>
<sequence length="77" mass="8744">MSPKMQALLLLLGLITLLVVHAEEELSENTESERGCIKLNQECVQNKTPCCNNRPCLCYMRFNICLCEKPLGEIFGR</sequence>
<proteinExistence type="inferred from homology"/>
<keyword id="KW-1015">Disulfide bond</keyword>
<keyword id="KW-0960">Knottin</keyword>
<keyword id="KW-0964">Secreted</keyword>
<keyword id="KW-0732">Signal</keyword>
<keyword id="KW-0800">Toxin</keyword>
<name>TX20B_LYCSI</name>
<dbReference type="EMBL" id="EU926139">
    <property type="protein sequence ID" value="ACI41471.1"/>
    <property type="molecule type" value="mRNA"/>
</dbReference>
<dbReference type="EMBL" id="FM864143">
    <property type="protein sequence ID" value="CAS03740.1"/>
    <property type="molecule type" value="mRNA"/>
</dbReference>
<dbReference type="ArachnoServer" id="AS001078">
    <property type="toxin name" value="U18-lycotoxin-Ls1a"/>
</dbReference>
<dbReference type="GO" id="GO:0005576">
    <property type="term" value="C:extracellular region"/>
    <property type="evidence" value="ECO:0007669"/>
    <property type="project" value="UniProtKB-SubCell"/>
</dbReference>
<dbReference type="GO" id="GO:0008200">
    <property type="term" value="F:ion channel inhibitor activity"/>
    <property type="evidence" value="ECO:0007669"/>
    <property type="project" value="InterPro"/>
</dbReference>
<dbReference type="GO" id="GO:0090729">
    <property type="term" value="F:toxin activity"/>
    <property type="evidence" value="ECO:0007669"/>
    <property type="project" value="UniProtKB-KW"/>
</dbReference>
<dbReference type="CDD" id="cd12960">
    <property type="entry name" value="Spider_toxin"/>
    <property type="match status" value="1"/>
</dbReference>
<dbReference type="Gene3D" id="4.10.40.10">
    <property type="match status" value="1"/>
</dbReference>
<dbReference type="InterPro" id="IPR004169">
    <property type="entry name" value="Spidertoxin"/>
</dbReference>
<dbReference type="Pfam" id="PF02819">
    <property type="entry name" value="Toxin_9"/>
    <property type="match status" value="1"/>
</dbReference>
<dbReference type="SUPFAM" id="SSF57059">
    <property type="entry name" value="omega toxin-like"/>
    <property type="match status" value="1"/>
</dbReference>
<accession>B6DD55</accession>
<protein>
    <recommendedName>
        <fullName evidence="4">U18-lycotoxin-Ls1a</fullName>
        <shortName evidence="4">U18-LCTX-Ls1a</shortName>
    </recommendedName>
    <alternativeName>
        <fullName>Toxin-like structure LSTX-P4</fullName>
    </alternativeName>
</protein>
<organism>
    <name type="scientific">Lycosa singoriensis</name>
    <name type="common">Wolf spider</name>
    <name type="synonym">Aranea singoriensis</name>
    <dbReference type="NCBI Taxonomy" id="434756"/>
    <lineage>
        <taxon>Eukaryota</taxon>
        <taxon>Metazoa</taxon>
        <taxon>Ecdysozoa</taxon>
        <taxon>Arthropoda</taxon>
        <taxon>Chelicerata</taxon>
        <taxon>Arachnida</taxon>
        <taxon>Araneae</taxon>
        <taxon>Araneomorphae</taxon>
        <taxon>Entelegynae</taxon>
        <taxon>Lycosoidea</taxon>
        <taxon>Lycosidae</taxon>
        <taxon>Lycosa</taxon>
    </lineage>
</organism>